<reference key="1">
    <citation type="journal article" date="2004" name="Proc. Natl. Acad. Sci. U.S.A.">
        <title>The genome sequence of the probiotic intestinal bacterium Lactobacillus johnsonii NCC 533.</title>
        <authorList>
            <person name="Pridmore R.D."/>
            <person name="Berger B."/>
            <person name="Desiere F."/>
            <person name="Vilanova D."/>
            <person name="Barretto C."/>
            <person name="Pittet A.-C."/>
            <person name="Zwahlen M.-C."/>
            <person name="Rouvet M."/>
            <person name="Altermann E."/>
            <person name="Barrangou R."/>
            <person name="Mollet B."/>
            <person name="Mercenier A."/>
            <person name="Klaenhammer T."/>
            <person name="Arigoni F."/>
            <person name="Schell M.A."/>
        </authorList>
    </citation>
    <scope>NUCLEOTIDE SEQUENCE [LARGE SCALE GENOMIC DNA]</scope>
    <source>
        <strain>CNCM I-1225 / La1 / NCC 533</strain>
    </source>
</reference>
<accession>Q74L62</accession>
<proteinExistence type="inferred from homology"/>
<name>ECFA1_LACJO</name>
<evidence type="ECO:0000255" key="1">
    <source>
        <dbReference type="HAMAP-Rule" id="MF_01710"/>
    </source>
</evidence>
<comment type="function">
    <text evidence="1">ATP-binding (A) component of a common energy-coupling factor (ECF) ABC-transporter complex. Unlike classic ABC transporters this ECF transporter provides the energy necessary to transport a number of different substrates.</text>
</comment>
<comment type="subunit">
    <text evidence="1">Forms a stable energy-coupling factor (ECF) transporter complex composed of 2 membrane-embedded substrate-binding proteins (S component), 2 ATP-binding proteins (A component) and 2 transmembrane proteins (T component).</text>
</comment>
<comment type="subcellular location">
    <subcellularLocation>
        <location evidence="1">Cell membrane</location>
        <topology evidence="1">Peripheral membrane protein</topology>
    </subcellularLocation>
</comment>
<comment type="similarity">
    <text evidence="1">Belongs to the ABC transporter superfamily. Energy-coupling factor EcfA family.</text>
</comment>
<gene>
    <name evidence="1" type="primary">ecfA1</name>
    <name type="synonym">cbiO1</name>
    <name type="ordered locus">LJ_0363</name>
</gene>
<keyword id="KW-0067">ATP-binding</keyword>
<keyword id="KW-1003">Cell membrane</keyword>
<keyword id="KW-0472">Membrane</keyword>
<keyword id="KW-0547">Nucleotide-binding</keyword>
<keyword id="KW-1278">Translocase</keyword>
<keyword id="KW-0813">Transport</keyword>
<organism>
    <name type="scientific">Lactobacillus johnsonii (strain CNCM I-12250 / La1 / NCC 533)</name>
    <dbReference type="NCBI Taxonomy" id="257314"/>
    <lineage>
        <taxon>Bacteria</taxon>
        <taxon>Bacillati</taxon>
        <taxon>Bacillota</taxon>
        <taxon>Bacilli</taxon>
        <taxon>Lactobacillales</taxon>
        <taxon>Lactobacillaceae</taxon>
        <taxon>Lactobacillus</taxon>
    </lineage>
</organism>
<protein>
    <recommendedName>
        <fullName evidence="1">Energy-coupling factor transporter ATP-binding protein EcfA1</fullName>
        <shortName evidence="1">ECF transporter A component EcfA1</shortName>
        <ecNumber evidence="1">7.-.-.-</ecNumber>
    </recommendedName>
</protein>
<sequence>MKDNIVTVKHLSFTYKDSKVPAVNDISFSIPRGSWTTLVGHNGSGKSTIARLLDGILLPHDNPRTVINVDGIELTEKTMWDIRDRVGIVFQNPDNQFVGATVEDDVAFGLENRQVSRSKMQTIVHDVLEQVDMLDFQKSEPQYLSGGQKQRVAIAGILAIGPKLIILDESTSMLDPAGKTKILSLIRDLQNKNGLTIFSITHDINEAVQADQMLVLDKGKLLASGSPREIFENEVLIKSAGLELPLFYKVKNELIKKEIHIPREVNSEEKLVKYLCQLNSKM</sequence>
<dbReference type="EC" id="7.-.-.-" evidence="1"/>
<dbReference type="EMBL" id="AE017198">
    <property type="protein sequence ID" value="AAS08353.1"/>
    <property type="molecule type" value="Genomic_DNA"/>
</dbReference>
<dbReference type="RefSeq" id="WP_011161524.1">
    <property type="nucleotide sequence ID" value="NC_005362.1"/>
</dbReference>
<dbReference type="SMR" id="Q74L62"/>
<dbReference type="GeneID" id="83569782"/>
<dbReference type="KEGG" id="ljo:LJ_0363"/>
<dbReference type="PATRIC" id="fig|257314.6.peg.385"/>
<dbReference type="eggNOG" id="COG1122">
    <property type="taxonomic scope" value="Bacteria"/>
</dbReference>
<dbReference type="HOGENOM" id="CLU_000604_1_22_9"/>
<dbReference type="Proteomes" id="UP000000581">
    <property type="component" value="Chromosome"/>
</dbReference>
<dbReference type="GO" id="GO:0043190">
    <property type="term" value="C:ATP-binding cassette (ABC) transporter complex"/>
    <property type="evidence" value="ECO:0007669"/>
    <property type="project" value="TreeGrafter"/>
</dbReference>
<dbReference type="GO" id="GO:0005524">
    <property type="term" value="F:ATP binding"/>
    <property type="evidence" value="ECO:0007669"/>
    <property type="project" value="UniProtKB-KW"/>
</dbReference>
<dbReference type="GO" id="GO:0016887">
    <property type="term" value="F:ATP hydrolysis activity"/>
    <property type="evidence" value="ECO:0007669"/>
    <property type="project" value="InterPro"/>
</dbReference>
<dbReference type="GO" id="GO:0042626">
    <property type="term" value="F:ATPase-coupled transmembrane transporter activity"/>
    <property type="evidence" value="ECO:0007669"/>
    <property type="project" value="TreeGrafter"/>
</dbReference>
<dbReference type="CDD" id="cd03225">
    <property type="entry name" value="ABC_cobalt_CbiO_domain1"/>
    <property type="match status" value="1"/>
</dbReference>
<dbReference type="FunFam" id="3.40.50.300:FF:000224">
    <property type="entry name" value="Energy-coupling factor transporter ATP-binding protein EcfA"/>
    <property type="match status" value="1"/>
</dbReference>
<dbReference type="Gene3D" id="3.40.50.300">
    <property type="entry name" value="P-loop containing nucleotide triphosphate hydrolases"/>
    <property type="match status" value="1"/>
</dbReference>
<dbReference type="InterPro" id="IPR003593">
    <property type="entry name" value="AAA+_ATPase"/>
</dbReference>
<dbReference type="InterPro" id="IPR003439">
    <property type="entry name" value="ABC_transporter-like_ATP-bd"/>
</dbReference>
<dbReference type="InterPro" id="IPR017871">
    <property type="entry name" value="ABC_transporter-like_CS"/>
</dbReference>
<dbReference type="InterPro" id="IPR015856">
    <property type="entry name" value="ABC_transpr_CbiO/EcfA_su"/>
</dbReference>
<dbReference type="InterPro" id="IPR050095">
    <property type="entry name" value="ECF_ABC_transporter_ATP-bd"/>
</dbReference>
<dbReference type="InterPro" id="IPR030947">
    <property type="entry name" value="EcfA_1"/>
</dbReference>
<dbReference type="InterPro" id="IPR027417">
    <property type="entry name" value="P-loop_NTPase"/>
</dbReference>
<dbReference type="NCBIfam" id="TIGR04520">
    <property type="entry name" value="ECF_ATPase_1"/>
    <property type="match status" value="1"/>
</dbReference>
<dbReference type="NCBIfam" id="NF010167">
    <property type="entry name" value="PRK13648.1"/>
    <property type="match status" value="1"/>
</dbReference>
<dbReference type="PANTHER" id="PTHR43553:SF24">
    <property type="entry name" value="ENERGY-COUPLING FACTOR TRANSPORTER ATP-BINDING PROTEIN ECFA1"/>
    <property type="match status" value="1"/>
</dbReference>
<dbReference type="PANTHER" id="PTHR43553">
    <property type="entry name" value="HEAVY METAL TRANSPORTER"/>
    <property type="match status" value="1"/>
</dbReference>
<dbReference type="Pfam" id="PF00005">
    <property type="entry name" value="ABC_tran"/>
    <property type="match status" value="1"/>
</dbReference>
<dbReference type="SMART" id="SM00382">
    <property type="entry name" value="AAA"/>
    <property type="match status" value="1"/>
</dbReference>
<dbReference type="SUPFAM" id="SSF52540">
    <property type="entry name" value="P-loop containing nucleoside triphosphate hydrolases"/>
    <property type="match status" value="1"/>
</dbReference>
<dbReference type="PROSITE" id="PS00211">
    <property type="entry name" value="ABC_TRANSPORTER_1"/>
    <property type="match status" value="1"/>
</dbReference>
<dbReference type="PROSITE" id="PS50893">
    <property type="entry name" value="ABC_TRANSPORTER_2"/>
    <property type="match status" value="1"/>
</dbReference>
<dbReference type="PROSITE" id="PS51246">
    <property type="entry name" value="CBIO"/>
    <property type="match status" value="1"/>
</dbReference>
<feature type="chain" id="PRO_0000092016" description="Energy-coupling factor transporter ATP-binding protein EcfA1">
    <location>
        <begin position="1"/>
        <end position="282"/>
    </location>
</feature>
<feature type="domain" description="ABC transporter" evidence="1">
    <location>
        <begin position="6"/>
        <end position="243"/>
    </location>
</feature>
<feature type="binding site" evidence="1">
    <location>
        <begin position="40"/>
        <end position="47"/>
    </location>
    <ligand>
        <name>ATP</name>
        <dbReference type="ChEBI" id="CHEBI:30616"/>
    </ligand>
</feature>